<accession>P58888</accession>
<organism>
    <name type="scientific">Pyrococcus furiosus (strain ATCC 43587 / DSM 3638 / JCM 8422 / Vc1)</name>
    <dbReference type="NCBI Taxonomy" id="186497"/>
    <lineage>
        <taxon>Archaea</taxon>
        <taxon>Methanobacteriati</taxon>
        <taxon>Methanobacteriota</taxon>
        <taxon>Thermococci</taxon>
        <taxon>Thermococcales</taxon>
        <taxon>Thermococcaceae</taxon>
        <taxon>Pyrococcus</taxon>
    </lineage>
</organism>
<feature type="chain" id="PRO_0000148380" description="Probable dihydroorotate dehydrogenase B (NAD(+)), electron transfer subunit">
    <location>
        <begin position="1"/>
        <end position="247"/>
    </location>
</feature>
<feature type="domain" description="FAD-binding FR-type" evidence="1">
    <location>
        <begin position="1"/>
        <end position="87"/>
    </location>
</feature>
<feature type="binding site" evidence="1">
    <location>
        <position position="201"/>
    </location>
    <ligand>
        <name>[2Fe-2S] cluster</name>
        <dbReference type="ChEBI" id="CHEBI:190135"/>
    </ligand>
</feature>
<feature type="binding site" evidence="1">
    <location>
        <position position="206"/>
    </location>
    <ligand>
        <name>[2Fe-2S] cluster</name>
        <dbReference type="ChEBI" id="CHEBI:190135"/>
    </ligand>
</feature>
<feature type="binding site" evidence="1">
    <location>
        <position position="209"/>
    </location>
    <ligand>
        <name>[2Fe-2S] cluster</name>
        <dbReference type="ChEBI" id="CHEBI:190135"/>
    </ligand>
</feature>
<feature type="binding site" evidence="1">
    <location>
        <position position="217"/>
    </location>
    <ligand>
        <name>[2Fe-2S] cluster</name>
        <dbReference type="ChEBI" id="CHEBI:190135"/>
    </ligand>
</feature>
<evidence type="ECO:0000255" key="1">
    <source>
        <dbReference type="HAMAP-Rule" id="MF_01211"/>
    </source>
</evidence>
<sequence length="247" mass="27690">MLRRVSIEETWEVAKNIKAFRLSEKLEFTPGQFIMLWLPGVEEKPLSLADKNLIMVKKVGRFTNELFKLKEGDYVWIRGPYGHGFSGKGKSVALIAGGIGIPPIYALAKYGNFKRSILIYGARTKEEIALPKDIESYVDEVIITTDDGSYGIKGFPTDVLMERRSEFDYVYACGPEIMLAKILEIMEFENVEVSAERYMKCGIGVCGSCALGPYLVCRDGPVFSGKQLINTEFGKYSRTPDGRIKPL</sequence>
<comment type="function">
    <text evidence="1">Responsible for channeling the electrons from the oxidation of dihydroorotate from the FMN redox center in the PyrD type B subunit to the ultimate electron acceptor NAD(+).</text>
</comment>
<comment type="cofactor">
    <cofactor evidence="1">
        <name>[2Fe-2S] cluster</name>
        <dbReference type="ChEBI" id="CHEBI:190135"/>
    </cofactor>
    <text evidence="1">Binds 1 [2Fe-2S] cluster per subunit.</text>
</comment>
<comment type="cofactor">
    <cofactor evidence="1">
        <name>FAD</name>
        <dbReference type="ChEBI" id="CHEBI:57692"/>
    </cofactor>
    <text evidence="1">Binds 1 FAD per subunit.</text>
</comment>
<comment type="pathway">
    <text evidence="1">Pyrimidine metabolism; UMP biosynthesis via de novo pathway; orotate from (S)-dihydroorotate (NAD(+) route): step 1/1.</text>
</comment>
<comment type="subunit">
    <text evidence="1">Heterotetramer of 2 PyrK and 2 PyrD type B subunits.</text>
</comment>
<comment type="similarity">
    <text evidence="1">Belongs to the PyrK family.</text>
</comment>
<proteinExistence type="inferred from homology"/>
<keyword id="KW-0001">2Fe-2S</keyword>
<keyword id="KW-0249">Electron transport</keyword>
<keyword id="KW-0274">FAD</keyword>
<keyword id="KW-0285">Flavoprotein</keyword>
<keyword id="KW-0408">Iron</keyword>
<keyword id="KW-0411">Iron-sulfur</keyword>
<keyword id="KW-0479">Metal-binding</keyword>
<keyword id="KW-0665">Pyrimidine biosynthesis</keyword>
<keyword id="KW-1185">Reference proteome</keyword>
<keyword id="KW-0813">Transport</keyword>
<name>PYRK_PYRFU</name>
<gene>
    <name evidence="1" type="primary">pyrK</name>
    <name type="ordered locus">PF0188</name>
</gene>
<dbReference type="EMBL" id="AE009950">
    <property type="protein sequence ID" value="AAL80312.1"/>
    <property type="molecule type" value="Genomic_DNA"/>
</dbReference>
<dbReference type="RefSeq" id="WP_011011301.1">
    <property type="nucleotide sequence ID" value="NZ_CP023154.1"/>
</dbReference>
<dbReference type="SMR" id="P58888"/>
<dbReference type="STRING" id="186497.PF0188"/>
<dbReference type="PaxDb" id="186497-PF0188"/>
<dbReference type="KEGG" id="pfu:PF0188"/>
<dbReference type="PATRIC" id="fig|186497.12.peg.195"/>
<dbReference type="eggNOG" id="arCOG02199">
    <property type="taxonomic scope" value="Archaea"/>
</dbReference>
<dbReference type="HOGENOM" id="CLU_003827_1_1_2"/>
<dbReference type="OrthoDB" id="35401at2157"/>
<dbReference type="PhylomeDB" id="P58888"/>
<dbReference type="UniPathway" id="UPA00070">
    <property type="reaction ID" value="UER00945"/>
</dbReference>
<dbReference type="Proteomes" id="UP000001013">
    <property type="component" value="Chromosome"/>
</dbReference>
<dbReference type="GO" id="GO:0051537">
    <property type="term" value="F:2 iron, 2 sulfur cluster binding"/>
    <property type="evidence" value="ECO:0007669"/>
    <property type="project" value="UniProtKB-KW"/>
</dbReference>
<dbReference type="GO" id="GO:0009055">
    <property type="term" value="F:electron transfer activity"/>
    <property type="evidence" value="ECO:0007669"/>
    <property type="project" value="UniProtKB-UniRule"/>
</dbReference>
<dbReference type="GO" id="GO:0050660">
    <property type="term" value="F:flavin adenine dinucleotide binding"/>
    <property type="evidence" value="ECO:0007669"/>
    <property type="project" value="InterPro"/>
</dbReference>
<dbReference type="GO" id="GO:0046872">
    <property type="term" value="F:metal ion binding"/>
    <property type="evidence" value="ECO:0007669"/>
    <property type="project" value="UniProtKB-KW"/>
</dbReference>
<dbReference type="GO" id="GO:0016491">
    <property type="term" value="F:oxidoreductase activity"/>
    <property type="evidence" value="ECO:0007669"/>
    <property type="project" value="InterPro"/>
</dbReference>
<dbReference type="GO" id="GO:0044205">
    <property type="term" value="P:'de novo' UMP biosynthetic process"/>
    <property type="evidence" value="ECO:0007669"/>
    <property type="project" value="UniProtKB-UniRule"/>
</dbReference>
<dbReference type="Gene3D" id="2.10.240.10">
    <property type="entry name" value="Dihydroorotate dehydrogenase, electron transfer subunit"/>
    <property type="match status" value="1"/>
</dbReference>
<dbReference type="Gene3D" id="3.40.50.80">
    <property type="entry name" value="Nucleotide-binding domain of ferredoxin-NADP reductase (FNR) module"/>
    <property type="match status" value="1"/>
</dbReference>
<dbReference type="Gene3D" id="2.40.30.10">
    <property type="entry name" value="Translation factors"/>
    <property type="match status" value="1"/>
</dbReference>
<dbReference type="HAMAP" id="MF_01211">
    <property type="entry name" value="DHODB_Fe_S_bind"/>
    <property type="match status" value="1"/>
</dbReference>
<dbReference type="InterPro" id="IPR012165">
    <property type="entry name" value="Cyt_c3_hydrogenase_gsu"/>
</dbReference>
<dbReference type="InterPro" id="IPR037117">
    <property type="entry name" value="Dihydroorotate_DH_ele_sf"/>
</dbReference>
<dbReference type="InterPro" id="IPR019480">
    <property type="entry name" value="Dihydroorotate_DH_Fe-S-bd"/>
</dbReference>
<dbReference type="InterPro" id="IPR023455">
    <property type="entry name" value="Dihydroorotate_DHASE_ETsu"/>
</dbReference>
<dbReference type="InterPro" id="IPR017927">
    <property type="entry name" value="FAD-bd_FR_type"/>
</dbReference>
<dbReference type="InterPro" id="IPR039261">
    <property type="entry name" value="FNR_nucleotide-bd"/>
</dbReference>
<dbReference type="InterPro" id="IPR001433">
    <property type="entry name" value="OxRdtase_FAD/NAD-bd"/>
</dbReference>
<dbReference type="InterPro" id="IPR050353">
    <property type="entry name" value="PyrK_electron_transfer"/>
</dbReference>
<dbReference type="InterPro" id="IPR017938">
    <property type="entry name" value="Riboflavin_synthase-like_b-brl"/>
</dbReference>
<dbReference type="NCBIfam" id="NF000796">
    <property type="entry name" value="PRK00054.1-1"/>
    <property type="match status" value="1"/>
</dbReference>
<dbReference type="PANTHER" id="PTHR43513">
    <property type="entry name" value="DIHYDROOROTATE DEHYDROGENASE B (NAD(+)), ELECTRON TRANSFER SUBUNIT"/>
    <property type="match status" value="1"/>
</dbReference>
<dbReference type="PANTHER" id="PTHR43513:SF3">
    <property type="entry name" value="DIHYDROOROTATE DEHYDROGENASE B (NAD(+)), ELECTRON TRANSFER SUBUNIT-RELATED"/>
    <property type="match status" value="1"/>
</dbReference>
<dbReference type="Pfam" id="PF10418">
    <property type="entry name" value="DHODB_Fe-S_bind"/>
    <property type="match status" value="1"/>
</dbReference>
<dbReference type="Pfam" id="PF00175">
    <property type="entry name" value="NAD_binding_1"/>
    <property type="match status" value="1"/>
</dbReference>
<dbReference type="PIRSF" id="PIRSF006816">
    <property type="entry name" value="Cyc3_hyd_g"/>
    <property type="match status" value="1"/>
</dbReference>
<dbReference type="SUPFAM" id="SSF52343">
    <property type="entry name" value="Ferredoxin reductase-like, C-terminal NADP-linked domain"/>
    <property type="match status" value="1"/>
</dbReference>
<dbReference type="SUPFAM" id="SSF63380">
    <property type="entry name" value="Riboflavin synthase domain-like"/>
    <property type="match status" value="1"/>
</dbReference>
<dbReference type="PROSITE" id="PS00197">
    <property type="entry name" value="2FE2S_FER_1"/>
    <property type="match status" value="1"/>
</dbReference>
<dbReference type="PROSITE" id="PS51384">
    <property type="entry name" value="FAD_FR"/>
    <property type="match status" value="1"/>
</dbReference>
<reference key="1">
    <citation type="journal article" date="1999" name="Genetics">
        <title>Divergence of the hyperthermophilic archaea Pyrococcus furiosus and P. horikoshii inferred from complete genomic sequences.</title>
        <authorList>
            <person name="Maeder D.L."/>
            <person name="Weiss R.B."/>
            <person name="Dunn D.M."/>
            <person name="Cherry J.L."/>
            <person name="Gonzalez J.M."/>
            <person name="DiRuggiero J."/>
            <person name="Robb F.T."/>
        </authorList>
    </citation>
    <scope>NUCLEOTIDE SEQUENCE [LARGE SCALE GENOMIC DNA]</scope>
    <source>
        <strain>ATCC 43587 / DSM 3638 / JCM 8422 / Vc1</strain>
    </source>
</reference>
<protein>
    <recommendedName>
        <fullName evidence="1">Probable dihydroorotate dehydrogenase B (NAD(+)), electron transfer subunit</fullName>
    </recommendedName>
    <alternativeName>
        <fullName evidence="1">Dihydroorotate oxidase B, electron transfer subunit</fullName>
    </alternativeName>
</protein>